<name>IF1_STAA1</name>
<evidence type="ECO:0000255" key="1">
    <source>
        <dbReference type="HAMAP-Rule" id="MF_00075"/>
    </source>
</evidence>
<protein>
    <recommendedName>
        <fullName evidence="1">Translation initiation factor IF-1</fullName>
    </recommendedName>
</protein>
<feature type="chain" id="PRO_0000338931" description="Translation initiation factor IF-1">
    <location>
        <begin position="1"/>
        <end position="72"/>
    </location>
</feature>
<feature type="domain" description="S1-like" evidence="1">
    <location>
        <begin position="1"/>
        <end position="72"/>
    </location>
</feature>
<comment type="function">
    <text evidence="1">One of the essential components for the initiation of protein synthesis. Stabilizes the binding of IF-2 and IF-3 on the 30S subunit to which N-formylmethionyl-tRNA(fMet) subsequently binds. Helps modulate mRNA selection, yielding the 30S pre-initiation complex (PIC). Upon addition of the 50S ribosomal subunit IF-1, IF-2 and IF-3 are released leaving the mature 70S translation initiation complex.</text>
</comment>
<comment type="subunit">
    <text evidence="1">Component of the 30S ribosomal translation pre-initiation complex which assembles on the 30S ribosome in the order IF-2 and IF-3, IF-1 and N-formylmethionyl-tRNA(fMet); mRNA recruitment can occur at any time during PIC assembly.</text>
</comment>
<comment type="subcellular location">
    <subcellularLocation>
        <location evidence="1">Cytoplasm</location>
    </subcellularLocation>
</comment>
<comment type="similarity">
    <text evidence="1">Belongs to the IF-1 family.</text>
</comment>
<sequence>MAKQDVIELEGTVLDTLPNAMFKVELENGHEILAHVSGKIRMNYIRILPGDKVTVEMSPYDLTRGRITYRYK</sequence>
<accession>A7X5D0</accession>
<gene>
    <name evidence="1" type="primary">infA</name>
    <name type="ordered locus">SAHV_2212</name>
</gene>
<reference key="1">
    <citation type="journal article" date="2008" name="Antimicrob. Agents Chemother.">
        <title>Mutated response regulator graR is responsible for phenotypic conversion of Staphylococcus aureus from heterogeneous vancomycin-intermediate resistance to vancomycin-intermediate resistance.</title>
        <authorList>
            <person name="Neoh H.-M."/>
            <person name="Cui L."/>
            <person name="Yuzawa H."/>
            <person name="Takeuchi F."/>
            <person name="Matsuo M."/>
            <person name="Hiramatsu K."/>
        </authorList>
    </citation>
    <scope>NUCLEOTIDE SEQUENCE [LARGE SCALE GENOMIC DNA]</scope>
    <source>
        <strain>Mu3 / ATCC 700698</strain>
    </source>
</reference>
<organism>
    <name type="scientific">Staphylococcus aureus (strain Mu3 / ATCC 700698)</name>
    <dbReference type="NCBI Taxonomy" id="418127"/>
    <lineage>
        <taxon>Bacteria</taxon>
        <taxon>Bacillati</taxon>
        <taxon>Bacillota</taxon>
        <taxon>Bacilli</taxon>
        <taxon>Bacillales</taxon>
        <taxon>Staphylococcaceae</taxon>
        <taxon>Staphylococcus</taxon>
    </lineage>
</organism>
<dbReference type="EMBL" id="AP009324">
    <property type="protein sequence ID" value="BAF79095.1"/>
    <property type="molecule type" value="Genomic_DNA"/>
</dbReference>
<dbReference type="RefSeq" id="WP_001118443.1">
    <property type="nucleotide sequence ID" value="NZ_CTYB01000025.1"/>
</dbReference>
<dbReference type="SMR" id="A7X5D0"/>
<dbReference type="GeneID" id="98346540"/>
<dbReference type="KEGG" id="saw:SAHV_2212"/>
<dbReference type="HOGENOM" id="CLU_151267_1_0_9"/>
<dbReference type="GO" id="GO:0005829">
    <property type="term" value="C:cytosol"/>
    <property type="evidence" value="ECO:0007669"/>
    <property type="project" value="TreeGrafter"/>
</dbReference>
<dbReference type="GO" id="GO:0043022">
    <property type="term" value="F:ribosome binding"/>
    <property type="evidence" value="ECO:0007669"/>
    <property type="project" value="UniProtKB-UniRule"/>
</dbReference>
<dbReference type="GO" id="GO:0019843">
    <property type="term" value="F:rRNA binding"/>
    <property type="evidence" value="ECO:0007669"/>
    <property type="project" value="UniProtKB-UniRule"/>
</dbReference>
<dbReference type="GO" id="GO:0003743">
    <property type="term" value="F:translation initiation factor activity"/>
    <property type="evidence" value="ECO:0007669"/>
    <property type="project" value="UniProtKB-UniRule"/>
</dbReference>
<dbReference type="CDD" id="cd04451">
    <property type="entry name" value="S1_IF1"/>
    <property type="match status" value="1"/>
</dbReference>
<dbReference type="FunFam" id="2.40.50.140:FF:000002">
    <property type="entry name" value="Translation initiation factor IF-1"/>
    <property type="match status" value="1"/>
</dbReference>
<dbReference type="Gene3D" id="2.40.50.140">
    <property type="entry name" value="Nucleic acid-binding proteins"/>
    <property type="match status" value="1"/>
</dbReference>
<dbReference type="HAMAP" id="MF_00075">
    <property type="entry name" value="IF_1"/>
    <property type="match status" value="1"/>
</dbReference>
<dbReference type="InterPro" id="IPR012340">
    <property type="entry name" value="NA-bd_OB-fold"/>
</dbReference>
<dbReference type="InterPro" id="IPR006196">
    <property type="entry name" value="RNA-binding_domain_S1_IF1"/>
</dbReference>
<dbReference type="InterPro" id="IPR003029">
    <property type="entry name" value="S1_domain"/>
</dbReference>
<dbReference type="InterPro" id="IPR004368">
    <property type="entry name" value="TIF_IF1"/>
</dbReference>
<dbReference type="NCBIfam" id="TIGR00008">
    <property type="entry name" value="infA"/>
    <property type="match status" value="1"/>
</dbReference>
<dbReference type="PANTHER" id="PTHR33370">
    <property type="entry name" value="TRANSLATION INITIATION FACTOR IF-1, CHLOROPLASTIC"/>
    <property type="match status" value="1"/>
</dbReference>
<dbReference type="PANTHER" id="PTHR33370:SF1">
    <property type="entry name" value="TRANSLATION INITIATION FACTOR IF-1, CHLOROPLASTIC"/>
    <property type="match status" value="1"/>
</dbReference>
<dbReference type="Pfam" id="PF01176">
    <property type="entry name" value="eIF-1a"/>
    <property type="match status" value="1"/>
</dbReference>
<dbReference type="SMART" id="SM00316">
    <property type="entry name" value="S1"/>
    <property type="match status" value="1"/>
</dbReference>
<dbReference type="SUPFAM" id="SSF50249">
    <property type="entry name" value="Nucleic acid-binding proteins"/>
    <property type="match status" value="1"/>
</dbReference>
<dbReference type="PROSITE" id="PS50832">
    <property type="entry name" value="S1_IF1_TYPE"/>
    <property type="match status" value="1"/>
</dbReference>
<proteinExistence type="inferred from homology"/>
<keyword id="KW-0963">Cytoplasm</keyword>
<keyword id="KW-0396">Initiation factor</keyword>
<keyword id="KW-0648">Protein biosynthesis</keyword>
<keyword id="KW-0694">RNA-binding</keyword>
<keyword id="KW-0699">rRNA-binding</keyword>